<gene>
    <name evidence="6" type="primary">gls93</name>
</gene>
<feature type="signal peptide" evidence="2">
    <location>
        <begin position="1"/>
        <end position="18"/>
    </location>
</feature>
<feature type="propeptide" id="PRO_0000399048" evidence="2 4">
    <location>
        <begin position="19"/>
        <end position="28"/>
    </location>
</feature>
<feature type="chain" id="PRO_5000052424" description="Exo-beta-D-glucosaminidase" evidence="4">
    <location>
        <begin position="29"/>
        <end position="892"/>
    </location>
</feature>
<feature type="active site" description="Proton donor" evidence="1">
    <location>
        <position position="464"/>
    </location>
</feature>
<feature type="active site" description="Nucleophile" evidence="1">
    <location>
        <position position="539"/>
    </location>
</feature>
<feature type="glycosylation site" description="N-linked (GlcNAc...) asparagine" evidence="2">
    <location>
        <position position="196"/>
    </location>
</feature>
<feature type="glycosylation site" description="N-linked (GlcNAc...) asparagine" evidence="2">
    <location>
        <position position="336"/>
    </location>
</feature>
<feature type="glycosylation site" description="N-linked (GlcNAc...) asparagine" evidence="2">
    <location>
        <position position="440"/>
    </location>
</feature>
<feature type="glycosylation site" description="N-linked (GlcNAc...) asparagine" evidence="2">
    <location>
        <position position="557"/>
    </location>
</feature>
<feature type="glycosylation site" description="N-linked (GlcNAc...) asparagine" evidence="2">
    <location>
        <position position="578"/>
    </location>
</feature>
<feature type="glycosylation site" description="N-linked (GlcNAc...) asparagine" evidence="2">
    <location>
        <position position="689"/>
    </location>
</feature>
<feature type="glycosylation site" description="N-linked (GlcNAc...) asparagine" evidence="2">
    <location>
        <position position="825"/>
    </location>
</feature>
<evidence type="ECO:0000250" key="1">
    <source>
        <dbReference type="UniProtKB" id="Q56F26"/>
    </source>
</evidence>
<evidence type="ECO:0000255" key="2"/>
<evidence type="ECO:0000269" key="3">
    <source>
    </source>
</evidence>
<evidence type="ECO:0000269" key="4">
    <source>
    </source>
</evidence>
<evidence type="ECO:0000305" key="5"/>
<evidence type="ECO:0000312" key="6">
    <source>
        <dbReference type="EMBL" id="BAD99604.1"/>
    </source>
</evidence>
<protein>
    <recommendedName>
        <fullName evidence="6">Exo-beta-D-glucosaminidase</fullName>
        <ecNumber>3.2.1.165</ecNumber>
    </recommendedName>
</protein>
<proteinExistence type="evidence at protein level"/>
<sequence length="892" mass="99428">MLANAIAALLLGSGIASAAGHGSPLTSKAGHRAVIPDWDLKSSSDVSKDLGGLSKPGVDTSSWYHAGTSRCTIMGCLINAGVYNDEELWYSDNLNHVNWGQFSVPWVYRHEFALSPAKGKHFLLQTNGITSKADLFFNGKQIADKEYQSGAYAGRTYDITNLAAKKNALLVQVYPTDYLYDFALGYVDWNPYPSDNGSGIWRDITIKETGSVSMGPVSVLVDIDVPVEKNPARVTVRAEAQNLESHAVEFNAAAVISGNSCSGEALKQTIKLAPGEKKLVQFTQTIKTPSIWWPKQWGDQPLYTAEVTFSVKGAVSDTAQTKFGVRKVTSFVNQFNDTQYSVNGHPFQVIGGGYGADMFLRWDSERFTRIVEYMLDMHQNTIRLEGKMEHPELYEICDEYGLMVMPGWECCDKWEAWAYNDELAIFPPPVWDANDYETANYSMIHEAAMMQPHPSVLTFLVGSDFWPNDEAVVLYANALKNAGWQTPIIASASKRGFPALLGPGGMKMDGPYDWVPPNYWYDVEPSEDRLGAAFGFGSELGAGVGTPELSSLRRFLNQSDLDDLWKNPNKNLFHMSTNASSFYNRKIYNQGLWKRYGAPTSLDDYLLKAQMMDYEATRAQYEGFGALWTASRPATGVIYWMLNNAWPSLHWNQFDYYLHPAGSYFGTKVGSRIEHVAYNYQKKEIWVINHSLYQTGSRNIKVELIDMNGKQIAKKLVQVRTKANSGFKAMDISSDINKLSSVAFLRLVLSDEKGSVLSRNVYWVTKTIDELNWDESTWYYTPVSKFVDYTPLNTLATAQVSVTTSGGKHLPGIPGSQTRTVTLENKSSVPAVFIRLTLVDSKGNDVNPVSWSDNYVTLWPHEKLQLEVGGWDGSGDKIQISGKNIKATTVKL</sequence>
<organism>
    <name type="scientific">Hypocrea jecorina</name>
    <name type="common">Trichoderma reesei</name>
    <dbReference type="NCBI Taxonomy" id="51453"/>
    <lineage>
        <taxon>Eukaryota</taxon>
        <taxon>Fungi</taxon>
        <taxon>Dikarya</taxon>
        <taxon>Ascomycota</taxon>
        <taxon>Pezizomycotina</taxon>
        <taxon>Sordariomycetes</taxon>
        <taxon>Hypocreomycetidae</taxon>
        <taxon>Hypocreales</taxon>
        <taxon>Hypocreaceae</taxon>
        <taxon>Trichoderma</taxon>
    </lineage>
</organism>
<reference evidence="5 6" key="1">
    <citation type="journal article" date="2006" name="Appl. Microbiol. Biotechnol.">
        <title>Cloning and heterologous expression of the exo-beta-D-glucosaminidase-encoding gene (gls93) from a filamentous fungus, Trichoderma reesei PC-3-7.</title>
        <authorList>
            <person name="Ike M."/>
            <person name="Isami K."/>
            <person name="Tanabe Y."/>
            <person name="Nogawa M."/>
            <person name="Ogasawara W."/>
            <person name="Okada H."/>
            <person name="Morikawa Y."/>
        </authorList>
    </citation>
    <scope>NUCLEOTIDE SEQUENCE [GENOMIC DNA]</scope>
    <scope>PROTEIN SEQUENCE OF 29-41; 112-135; 447-461 AND 812-841</scope>
    <scope>FUNCTION</scope>
    <scope>CATALYTIC ACTIVITY</scope>
    <source>
        <strain evidence="4">PC-3-7</strain>
    </source>
</reference>
<reference evidence="5" key="2">
    <citation type="journal article" date="1998" name="Appl. Environ. Microbiol.">
        <title>Purification and Characterization of Exo-beta-d-Glucosaminidase from a Cellulolytic Fungus, Trichoderma reesei PC-3-7.</title>
        <authorList>
            <person name="Nogawa M."/>
            <person name="Takahashi H."/>
            <person name="Kashiwagi A."/>
            <person name="Ohshima K."/>
            <person name="Okada H."/>
            <person name="Morikawa Y."/>
        </authorList>
    </citation>
    <scope>FUNCTION</scope>
    <scope>CATALYTIC ACTIVITY</scope>
    <scope>BIOPHYSICOCHEMICAL PROPERTIES</scope>
    <scope>SUBUNIT</scope>
    <scope>SUBCELLULAR LOCATION</scope>
    <scope>INDUCTION</scope>
</reference>
<keyword id="KW-0119">Carbohydrate metabolism</keyword>
<keyword id="KW-0146">Chitin degradation</keyword>
<keyword id="KW-0903">Direct protein sequencing</keyword>
<keyword id="KW-0325">Glycoprotein</keyword>
<keyword id="KW-0326">Glycosidase</keyword>
<keyword id="KW-0378">Hydrolase</keyword>
<keyword id="KW-0624">Polysaccharide degradation</keyword>
<keyword id="KW-0964">Secreted</keyword>
<keyword id="KW-0732">Signal</keyword>
<comment type="function">
    <text evidence="3 4">Hydrolyzes chitosan and chitooligosaccharides with retention of anomeric configuration. Has no activity against beta-D-galactoside, beta-D-glucuronide, beta-D-mannoside, chitin, glycol chitosan, cellulose, N,N'-diacetylchitibiose and pNP-GlcNAc.</text>
</comment>
<comment type="catalytic activity">
    <reaction evidence="3 4">
        <text>Hydrolysis of chitosan or chitosan oligosaccharides to remove successive D-glucosamine residues from the non-reducing termini.</text>
        <dbReference type="EC" id="3.2.1.165"/>
    </reaction>
</comment>
<comment type="biophysicochemical properties">
    <phDependence>
        <text evidence="3">Optimum pH is 4.0. Stable between pH 6.0 and 9.0.</text>
    </phDependence>
    <temperatureDependence>
        <text evidence="3">Optimum temperature is 50 degrees Celsius. Stable below 50 degrees Celsius.</text>
    </temperatureDependence>
</comment>
<comment type="subunit">
    <text evidence="3">Monomer.</text>
</comment>
<comment type="subcellular location">
    <subcellularLocation>
        <location evidence="3">Secreted</location>
        <location evidence="3">Extracellular space</location>
    </subcellularLocation>
</comment>
<comment type="induction">
    <text evidence="3">By growth on GlcN or GlcNAc.</text>
</comment>
<comment type="similarity">
    <text evidence="2">Belongs to the glycosyl hydrolase 2 family.</text>
</comment>
<name>EBDG_HYPJE</name>
<accession>Q4R1C4</accession>
<dbReference type="EC" id="3.2.1.165"/>
<dbReference type="EMBL" id="AB218755">
    <property type="protein sequence ID" value="BAD99604.1"/>
    <property type="molecule type" value="Genomic_DNA"/>
</dbReference>
<dbReference type="SMR" id="Q4R1C4"/>
<dbReference type="CAZy" id="GH2">
    <property type="family name" value="Glycoside Hydrolase Family 2"/>
</dbReference>
<dbReference type="GlyCosmos" id="Q4R1C4">
    <property type="glycosylation" value="7 sites, No reported glycans"/>
</dbReference>
<dbReference type="KEGG" id="ag:BAD99604"/>
<dbReference type="VEuPathDB" id="FungiDB:TrQ_000043"/>
<dbReference type="OMA" id="AWPNLHW"/>
<dbReference type="BRENDA" id="3.2.1.165">
    <property type="organism ID" value="6451"/>
</dbReference>
<dbReference type="GO" id="GO:0005576">
    <property type="term" value="C:extracellular region"/>
    <property type="evidence" value="ECO:0000314"/>
    <property type="project" value="UniProtKB"/>
</dbReference>
<dbReference type="GO" id="GO:0052761">
    <property type="term" value="F:exo-1,4-beta-D-glucosaminidase activity"/>
    <property type="evidence" value="ECO:0007669"/>
    <property type="project" value="UniProtKB-EC"/>
</dbReference>
<dbReference type="GO" id="GO:0004553">
    <property type="term" value="F:hydrolase activity, hydrolyzing O-glycosyl compounds"/>
    <property type="evidence" value="ECO:0000314"/>
    <property type="project" value="UniProtKB"/>
</dbReference>
<dbReference type="GO" id="GO:0006032">
    <property type="term" value="P:chitin catabolic process"/>
    <property type="evidence" value="ECO:0007669"/>
    <property type="project" value="UniProtKB-KW"/>
</dbReference>
<dbReference type="GO" id="GO:0000272">
    <property type="term" value="P:polysaccharide catabolic process"/>
    <property type="evidence" value="ECO:0000314"/>
    <property type="project" value="UniProtKB"/>
</dbReference>
<dbReference type="FunFam" id="2.60.120.260:FF:000182">
    <property type="entry name" value="Exo-beta-D-glucosaminidase"/>
    <property type="match status" value="1"/>
</dbReference>
<dbReference type="FunFam" id="2.60.40.10:FF:001725">
    <property type="entry name" value="Exo-beta-D-glucosaminidase"/>
    <property type="match status" value="1"/>
</dbReference>
<dbReference type="FunFam" id="2.60.40.10:FF:002523">
    <property type="entry name" value="Exo-beta-D-glucosaminidase"/>
    <property type="match status" value="1"/>
</dbReference>
<dbReference type="FunFam" id="3.20.20.80:FF:000166">
    <property type="entry name" value="Exo-beta-D-glucosaminidase"/>
    <property type="match status" value="1"/>
</dbReference>
<dbReference type="FunFam" id="2.60.40.10:FF:002252">
    <property type="entry name" value="Glycoside hydrolase family 2"/>
    <property type="match status" value="1"/>
</dbReference>
<dbReference type="Gene3D" id="2.60.120.260">
    <property type="entry name" value="Galactose-binding domain-like"/>
    <property type="match status" value="1"/>
</dbReference>
<dbReference type="Gene3D" id="3.20.20.80">
    <property type="entry name" value="Glycosidases"/>
    <property type="match status" value="1"/>
</dbReference>
<dbReference type="Gene3D" id="2.60.40.10">
    <property type="entry name" value="Immunoglobulins"/>
    <property type="match status" value="3"/>
</dbReference>
<dbReference type="InterPro" id="IPR036156">
    <property type="entry name" value="Beta-gal/glucu_dom_sf"/>
</dbReference>
<dbReference type="InterPro" id="IPR054593">
    <property type="entry name" value="Beta-mannosidase-like_N2"/>
</dbReference>
<dbReference type="InterPro" id="IPR043534">
    <property type="entry name" value="EBDG/EBM"/>
</dbReference>
<dbReference type="InterPro" id="IPR008979">
    <property type="entry name" value="Galactose-bd-like_sf"/>
</dbReference>
<dbReference type="InterPro" id="IPR006102">
    <property type="entry name" value="Glyco_hydro_2_Ig-like"/>
</dbReference>
<dbReference type="InterPro" id="IPR017853">
    <property type="entry name" value="Glycoside_hydrolase_SF"/>
</dbReference>
<dbReference type="InterPro" id="IPR013783">
    <property type="entry name" value="Ig-like_fold"/>
</dbReference>
<dbReference type="InterPro" id="IPR041351">
    <property type="entry name" value="Ig_GlcNase"/>
</dbReference>
<dbReference type="InterPro" id="IPR041447">
    <property type="entry name" value="Mannosidase_ig"/>
</dbReference>
<dbReference type="PANTHER" id="PTHR43536">
    <property type="entry name" value="MANNOSYLGLYCOPROTEIN ENDO-BETA-MANNOSIDASE"/>
    <property type="match status" value="1"/>
</dbReference>
<dbReference type="PANTHER" id="PTHR43536:SF1">
    <property type="entry name" value="MANNOSYLGLYCOPROTEIN ENDO-BETA-MANNOSIDASE"/>
    <property type="match status" value="1"/>
</dbReference>
<dbReference type="Pfam" id="PF00703">
    <property type="entry name" value="Glyco_hydro_2"/>
    <property type="match status" value="1"/>
</dbReference>
<dbReference type="Pfam" id="PF22666">
    <property type="entry name" value="Glyco_hydro_2_N2"/>
    <property type="match status" value="1"/>
</dbReference>
<dbReference type="Pfam" id="PF18368">
    <property type="entry name" value="Ig_GlcNase"/>
    <property type="match status" value="1"/>
</dbReference>
<dbReference type="Pfam" id="PF17786">
    <property type="entry name" value="Mannosidase_ig"/>
    <property type="match status" value="1"/>
</dbReference>
<dbReference type="SUPFAM" id="SSF51445">
    <property type="entry name" value="(Trans)glycosidases"/>
    <property type="match status" value="1"/>
</dbReference>
<dbReference type="SUPFAM" id="SSF49303">
    <property type="entry name" value="beta-Galactosidase/glucuronidase domain"/>
    <property type="match status" value="3"/>
</dbReference>
<dbReference type="SUPFAM" id="SSF49785">
    <property type="entry name" value="Galactose-binding domain-like"/>
    <property type="match status" value="1"/>
</dbReference>